<evidence type="ECO:0000255" key="1">
    <source>
        <dbReference type="HAMAP-Rule" id="MF_00815"/>
    </source>
</evidence>
<reference key="1">
    <citation type="journal article" date="2007" name="PLoS ONE">
        <title>Analysis of the neurotoxin complex genes in Clostridium botulinum A1-A4 and B1 strains: BoNT/A3, /Ba4 and /B1 clusters are located within plasmids.</title>
        <authorList>
            <person name="Smith T.J."/>
            <person name="Hill K.K."/>
            <person name="Foley B.T."/>
            <person name="Detter J.C."/>
            <person name="Munk A.C."/>
            <person name="Bruce D.C."/>
            <person name="Doggett N.A."/>
            <person name="Smith L.A."/>
            <person name="Marks J.D."/>
            <person name="Xie G."/>
            <person name="Brettin T.S."/>
        </authorList>
    </citation>
    <scope>NUCLEOTIDE SEQUENCE [LARGE SCALE GENOMIC DNA]</scope>
    <source>
        <strain>Loch Maree / Type A3</strain>
    </source>
</reference>
<gene>
    <name evidence="1" type="primary">atpG</name>
    <name type="ordered locus">CLK_3330</name>
</gene>
<accession>B1KSS7</accession>
<keyword id="KW-0066">ATP synthesis</keyword>
<keyword id="KW-1003">Cell membrane</keyword>
<keyword id="KW-0139">CF(1)</keyword>
<keyword id="KW-0375">Hydrogen ion transport</keyword>
<keyword id="KW-0406">Ion transport</keyword>
<keyword id="KW-0472">Membrane</keyword>
<keyword id="KW-0813">Transport</keyword>
<name>ATPG_CLOBM</name>
<dbReference type="EMBL" id="CP000962">
    <property type="protein sequence ID" value="ACA55973.1"/>
    <property type="molecule type" value="Genomic_DNA"/>
</dbReference>
<dbReference type="RefSeq" id="WP_012343888.1">
    <property type="nucleotide sequence ID" value="NC_010520.1"/>
</dbReference>
<dbReference type="SMR" id="B1KSS7"/>
<dbReference type="KEGG" id="cbl:CLK_3330"/>
<dbReference type="HOGENOM" id="CLU_050669_0_1_9"/>
<dbReference type="GO" id="GO:0005886">
    <property type="term" value="C:plasma membrane"/>
    <property type="evidence" value="ECO:0007669"/>
    <property type="project" value="UniProtKB-SubCell"/>
</dbReference>
<dbReference type="GO" id="GO:0045259">
    <property type="term" value="C:proton-transporting ATP synthase complex"/>
    <property type="evidence" value="ECO:0007669"/>
    <property type="project" value="UniProtKB-KW"/>
</dbReference>
<dbReference type="GO" id="GO:0005524">
    <property type="term" value="F:ATP binding"/>
    <property type="evidence" value="ECO:0007669"/>
    <property type="project" value="UniProtKB-UniRule"/>
</dbReference>
<dbReference type="GO" id="GO:0046933">
    <property type="term" value="F:proton-transporting ATP synthase activity, rotational mechanism"/>
    <property type="evidence" value="ECO:0007669"/>
    <property type="project" value="UniProtKB-UniRule"/>
</dbReference>
<dbReference type="GO" id="GO:0042777">
    <property type="term" value="P:proton motive force-driven plasma membrane ATP synthesis"/>
    <property type="evidence" value="ECO:0007669"/>
    <property type="project" value="UniProtKB-UniRule"/>
</dbReference>
<dbReference type="CDD" id="cd12151">
    <property type="entry name" value="F1-ATPase_gamma"/>
    <property type="match status" value="1"/>
</dbReference>
<dbReference type="Gene3D" id="3.40.1380.10">
    <property type="match status" value="1"/>
</dbReference>
<dbReference type="Gene3D" id="1.10.287.80">
    <property type="entry name" value="ATP synthase, gamma subunit, helix hairpin domain"/>
    <property type="match status" value="1"/>
</dbReference>
<dbReference type="HAMAP" id="MF_00815">
    <property type="entry name" value="ATP_synth_gamma_bact"/>
    <property type="match status" value="1"/>
</dbReference>
<dbReference type="InterPro" id="IPR035968">
    <property type="entry name" value="ATP_synth_F1_ATPase_gsu"/>
</dbReference>
<dbReference type="InterPro" id="IPR000131">
    <property type="entry name" value="ATP_synth_F1_gsu"/>
</dbReference>
<dbReference type="InterPro" id="IPR023632">
    <property type="entry name" value="ATP_synth_F1_gsu_CS"/>
</dbReference>
<dbReference type="NCBIfam" id="TIGR01146">
    <property type="entry name" value="ATPsyn_F1gamma"/>
    <property type="match status" value="1"/>
</dbReference>
<dbReference type="PANTHER" id="PTHR11693">
    <property type="entry name" value="ATP SYNTHASE GAMMA CHAIN"/>
    <property type="match status" value="1"/>
</dbReference>
<dbReference type="PANTHER" id="PTHR11693:SF22">
    <property type="entry name" value="ATP SYNTHASE SUBUNIT GAMMA, MITOCHONDRIAL"/>
    <property type="match status" value="1"/>
</dbReference>
<dbReference type="Pfam" id="PF00231">
    <property type="entry name" value="ATP-synt"/>
    <property type="match status" value="1"/>
</dbReference>
<dbReference type="PRINTS" id="PR00126">
    <property type="entry name" value="ATPASEGAMMA"/>
</dbReference>
<dbReference type="SUPFAM" id="SSF52943">
    <property type="entry name" value="ATP synthase (F1-ATPase), gamma subunit"/>
    <property type="match status" value="1"/>
</dbReference>
<dbReference type="PROSITE" id="PS00153">
    <property type="entry name" value="ATPASE_GAMMA"/>
    <property type="match status" value="1"/>
</dbReference>
<proteinExistence type="inferred from homology"/>
<comment type="function">
    <text evidence="1">Produces ATP from ADP in the presence of a proton gradient across the membrane. The gamma chain is believed to be important in regulating ATPase activity and the flow of protons through the CF(0) complex.</text>
</comment>
<comment type="subunit">
    <text evidence="1">F-type ATPases have 2 components, CF(1) - the catalytic core - and CF(0) - the membrane proton channel. CF(1) has five subunits: alpha(3), beta(3), gamma(1), delta(1), epsilon(1). CF(0) has three main subunits: a, b and c.</text>
</comment>
<comment type="subcellular location">
    <subcellularLocation>
        <location evidence="1">Cell membrane</location>
        <topology evidence="1">Peripheral membrane protein</topology>
    </subcellularLocation>
</comment>
<comment type="similarity">
    <text evidence="1">Belongs to the ATPase gamma chain family.</text>
</comment>
<organism>
    <name type="scientific">Clostridium botulinum (strain Loch Maree / Type A3)</name>
    <dbReference type="NCBI Taxonomy" id="498214"/>
    <lineage>
        <taxon>Bacteria</taxon>
        <taxon>Bacillati</taxon>
        <taxon>Bacillota</taxon>
        <taxon>Clostridia</taxon>
        <taxon>Eubacteriales</taxon>
        <taxon>Clostridiaceae</taxon>
        <taxon>Clostridium</taxon>
    </lineage>
</organism>
<feature type="chain" id="PRO_1000134129" description="ATP synthase gamma chain">
    <location>
        <begin position="1"/>
        <end position="282"/>
    </location>
</feature>
<sequence length="282" mass="31846">MAGAGLIGIRRRIKSVTNIRKITKAMGLVSTAKLRKARLNLEINKKYYNEYKVILKDIINFIEDSNIYIDGNGSHKKLYVIFTSDSGLCGSFNINIINNVINEIKEDKENSLVIVIGQKGRMYLKKLGINTLAEYIEIPDVPTTKEARTIAKNIIKLYSSKEVGEVFLVYSEFYSPVKQQVLINKILPFTKENKSDNKYIEFNPPVTRFVDEILENYLKATILNCFSNSKASENGSRMTAMNGATDNANDLLDNLDLQFNRLRQSAITQEISEIVGGAEAQR</sequence>
<protein>
    <recommendedName>
        <fullName evidence="1">ATP synthase gamma chain</fullName>
    </recommendedName>
    <alternativeName>
        <fullName evidence="1">ATP synthase F1 sector gamma subunit</fullName>
    </alternativeName>
    <alternativeName>
        <fullName evidence="1">F-ATPase gamma subunit</fullName>
    </alternativeName>
</protein>